<organism>
    <name type="scientific">Salmonella typhi</name>
    <dbReference type="NCBI Taxonomy" id="90370"/>
    <lineage>
        <taxon>Bacteria</taxon>
        <taxon>Pseudomonadati</taxon>
        <taxon>Pseudomonadota</taxon>
        <taxon>Gammaproteobacteria</taxon>
        <taxon>Enterobacterales</taxon>
        <taxon>Enterobacteriaceae</taxon>
        <taxon>Salmonella</taxon>
    </lineage>
</organism>
<protein>
    <recommendedName>
        <fullName evidence="1">Large ribosomal subunit protein uL16</fullName>
    </recommendedName>
    <alternativeName>
        <fullName evidence="2">50S ribosomal protein L16</fullName>
    </alternativeName>
</protein>
<name>RL16_SALTI</name>
<gene>
    <name evidence="1" type="primary">rplP</name>
    <name type="ordered locus">STY4365</name>
    <name type="ordered locus">t4072</name>
</gene>
<sequence>MLQPKRTKFRKMHKGRNRGLAAGADVSFGSFGLKAVGRGRLTARQIEAARRAMTRAVKRQGKIWIRVFPDKPITEKPLAVRMGKGKGNVEYWVALIQPGKVLYEMDGVPEELAREAFKLAAAKLPIKTTFVTKTVM</sequence>
<proteinExistence type="inferred from homology"/>
<keyword id="KW-0687">Ribonucleoprotein</keyword>
<keyword id="KW-0689">Ribosomal protein</keyword>
<keyword id="KW-0694">RNA-binding</keyword>
<keyword id="KW-0699">rRNA-binding</keyword>
<keyword id="KW-0820">tRNA-binding</keyword>
<evidence type="ECO:0000255" key="1">
    <source>
        <dbReference type="HAMAP-Rule" id="MF_01342"/>
    </source>
</evidence>
<evidence type="ECO:0000305" key="2"/>
<reference key="1">
    <citation type="journal article" date="2003" name="J. Bacteriol.">
        <title>Comparative genomics of Salmonella enterica serovar Typhi strains Ty2 and CT18.</title>
        <authorList>
            <person name="Deng W."/>
            <person name="Liou S.-R."/>
            <person name="Plunkett G. III"/>
            <person name="Mayhew G.F."/>
            <person name="Rose D.J."/>
            <person name="Burland V."/>
            <person name="Kodoyianni V."/>
            <person name="Schwartz D.C."/>
            <person name="Blattner F.R."/>
        </authorList>
    </citation>
    <scope>NUCLEOTIDE SEQUENCE [LARGE SCALE GENOMIC DNA]</scope>
    <source>
        <strain>ATCC 700931 / Ty2</strain>
    </source>
</reference>
<reference key="2">
    <citation type="journal article" date="2001" name="Nature">
        <title>Complete genome sequence of a multiple drug resistant Salmonella enterica serovar Typhi CT18.</title>
        <authorList>
            <person name="Parkhill J."/>
            <person name="Dougan G."/>
            <person name="James K.D."/>
            <person name="Thomson N.R."/>
            <person name="Pickard D."/>
            <person name="Wain J."/>
            <person name="Churcher C.M."/>
            <person name="Mungall K.L."/>
            <person name="Bentley S.D."/>
            <person name="Holden M.T.G."/>
            <person name="Sebaihia M."/>
            <person name="Baker S."/>
            <person name="Basham D."/>
            <person name="Brooks K."/>
            <person name="Chillingworth T."/>
            <person name="Connerton P."/>
            <person name="Cronin A."/>
            <person name="Davis P."/>
            <person name="Davies R.M."/>
            <person name="Dowd L."/>
            <person name="White N."/>
            <person name="Farrar J."/>
            <person name="Feltwell T."/>
            <person name="Hamlin N."/>
            <person name="Haque A."/>
            <person name="Hien T.T."/>
            <person name="Holroyd S."/>
            <person name="Jagels K."/>
            <person name="Krogh A."/>
            <person name="Larsen T.S."/>
            <person name="Leather S."/>
            <person name="Moule S."/>
            <person name="O'Gaora P."/>
            <person name="Parry C."/>
            <person name="Quail M.A."/>
            <person name="Rutherford K.M."/>
            <person name="Simmonds M."/>
            <person name="Skelton J."/>
            <person name="Stevens K."/>
            <person name="Whitehead S."/>
            <person name="Barrell B.G."/>
        </authorList>
    </citation>
    <scope>NUCLEOTIDE SEQUENCE [LARGE SCALE GENOMIC DNA]</scope>
    <source>
        <strain>CT18</strain>
    </source>
</reference>
<comment type="function">
    <text evidence="1">Binds 23S rRNA and is also seen to make contacts with the A and possibly P site tRNAs.</text>
</comment>
<comment type="subunit">
    <text evidence="1">Part of the 50S ribosomal subunit.</text>
</comment>
<comment type="similarity">
    <text evidence="1">Belongs to the universal ribosomal protein uL16 family.</text>
</comment>
<accession>Q8XET6</accession>
<accession>Q7ALU4</accession>
<dbReference type="EMBL" id="AE014613">
    <property type="protein sequence ID" value="AAO71539.1"/>
    <property type="molecule type" value="Genomic_DNA"/>
</dbReference>
<dbReference type="EMBL" id="AL513382">
    <property type="protein sequence ID" value="CAD08180.1"/>
    <property type="molecule type" value="Genomic_DNA"/>
</dbReference>
<dbReference type="RefSeq" id="NP_458467.1">
    <property type="nucleotide sequence ID" value="NC_003198.1"/>
</dbReference>
<dbReference type="RefSeq" id="WP_000941208.1">
    <property type="nucleotide sequence ID" value="NZ_WSUR01000046.1"/>
</dbReference>
<dbReference type="SMR" id="Q8XET6"/>
<dbReference type="STRING" id="220341.gene:17588193"/>
<dbReference type="GeneID" id="93035738"/>
<dbReference type="KEGG" id="stt:t4072"/>
<dbReference type="KEGG" id="sty:STY4365"/>
<dbReference type="PATRIC" id="fig|220341.7.peg.4461"/>
<dbReference type="eggNOG" id="COG0197">
    <property type="taxonomic scope" value="Bacteria"/>
</dbReference>
<dbReference type="HOGENOM" id="CLU_078858_2_1_6"/>
<dbReference type="OMA" id="KGAVEYW"/>
<dbReference type="OrthoDB" id="9802589at2"/>
<dbReference type="Proteomes" id="UP000000541">
    <property type="component" value="Chromosome"/>
</dbReference>
<dbReference type="Proteomes" id="UP000002670">
    <property type="component" value="Chromosome"/>
</dbReference>
<dbReference type="GO" id="GO:0022625">
    <property type="term" value="C:cytosolic large ribosomal subunit"/>
    <property type="evidence" value="ECO:0007669"/>
    <property type="project" value="TreeGrafter"/>
</dbReference>
<dbReference type="GO" id="GO:0019843">
    <property type="term" value="F:rRNA binding"/>
    <property type="evidence" value="ECO:0007669"/>
    <property type="project" value="UniProtKB-UniRule"/>
</dbReference>
<dbReference type="GO" id="GO:0003735">
    <property type="term" value="F:structural constituent of ribosome"/>
    <property type="evidence" value="ECO:0007669"/>
    <property type="project" value="InterPro"/>
</dbReference>
<dbReference type="GO" id="GO:0000049">
    <property type="term" value="F:tRNA binding"/>
    <property type="evidence" value="ECO:0007669"/>
    <property type="project" value="UniProtKB-KW"/>
</dbReference>
<dbReference type="GO" id="GO:0006412">
    <property type="term" value="P:translation"/>
    <property type="evidence" value="ECO:0007669"/>
    <property type="project" value="UniProtKB-UniRule"/>
</dbReference>
<dbReference type="CDD" id="cd01433">
    <property type="entry name" value="Ribosomal_L16_L10e"/>
    <property type="match status" value="1"/>
</dbReference>
<dbReference type="FunFam" id="3.90.1170.10:FF:000001">
    <property type="entry name" value="50S ribosomal protein L16"/>
    <property type="match status" value="1"/>
</dbReference>
<dbReference type="Gene3D" id="3.90.1170.10">
    <property type="entry name" value="Ribosomal protein L10e/L16"/>
    <property type="match status" value="1"/>
</dbReference>
<dbReference type="HAMAP" id="MF_01342">
    <property type="entry name" value="Ribosomal_uL16"/>
    <property type="match status" value="1"/>
</dbReference>
<dbReference type="InterPro" id="IPR047873">
    <property type="entry name" value="Ribosomal_uL16"/>
</dbReference>
<dbReference type="InterPro" id="IPR000114">
    <property type="entry name" value="Ribosomal_uL16_bact-type"/>
</dbReference>
<dbReference type="InterPro" id="IPR020798">
    <property type="entry name" value="Ribosomal_uL16_CS"/>
</dbReference>
<dbReference type="InterPro" id="IPR016180">
    <property type="entry name" value="Ribosomal_uL16_dom"/>
</dbReference>
<dbReference type="InterPro" id="IPR036920">
    <property type="entry name" value="Ribosomal_uL16_sf"/>
</dbReference>
<dbReference type="NCBIfam" id="TIGR01164">
    <property type="entry name" value="rplP_bact"/>
    <property type="match status" value="1"/>
</dbReference>
<dbReference type="PANTHER" id="PTHR12220">
    <property type="entry name" value="50S/60S RIBOSOMAL PROTEIN L16"/>
    <property type="match status" value="1"/>
</dbReference>
<dbReference type="PANTHER" id="PTHR12220:SF13">
    <property type="entry name" value="LARGE RIBOSOMAL SUBUNIT PROTEIN UL16M"/>
    <property type="match status" value="1"/>
</dbReference>
<dbReference type="Pfam" id="PF00252">
    <property type="entry name" value="Ribosomal_L16"/>
    <property type="match status" value="1"/>
</dbReference>
<dbReference type="PRINTS" id="PR00060">
    <property type="entry name" value="RIBOSOMALL16"/>
</dbReference>
<dbReference type="SUPFAM" id="SSF54686">
    <property type="entry name" value="Ribosomal protein L16p/L10e"/>
    <property type="match status" value="1"/>
</dbReference>
<dbReference type="PROSITE" id="PS00586">
    <property type="entry name" value="RIBOSOMAL_L16_1"/>
    <property type="match status" value="1"/>
</dbReference>
<dbReference type="PROSITE" id="PS00701">
    <property type="entry name" value="RIBOSOMAL_L16_2"/>
    <property type="match status" value="1"/>
</dbReference>
<feature type="chain" id="PRO_0000062193" description="Large ribosomal subunit protein uL16">
    <location>
        <begin position="1"/>
        <end position="136"/>
    </location>
</feature>